<protein>
    <recommendedName>
        <fullName evidence="1">Histidinol dehydrogenase</fullName>
        <shortName evidence="1">HDH</shortName>
        <ecNumber evidence="1">1.1.1.23</ecNumber>
    </recommendedName>
</protein>
<organism>
    <name type="scientific">Brucella suis biovar 1 (strain 1330)</name>
    <dbReference type="NCBI Taxonomy" id="204722"/>
    <lineage>
        <taxon>Bacteria</taxon>
        <taxon>Pseudomonadati</taxon>
        <taxon>Pseudomonadota</taxon>
        <taxon>Alphaproteobacteria</taxon>
        <taxon>Hyphomicrobiales</taxon>
        <taxon>Brucellaceae</taxon>
        <taxon>Brucella/Ochrobactrum group</taxon>
        <taxon>Brucella</taxon>
    </lineage>
</organism>
<feature type="chain" id="PRO_0000135741" description="Histidinol dehydrogenase">
    <location>
        <begin position="1"/>
        <end position="430"/>
    </location>
</feature>
<feature type="active site" description="Proton acceptor" evidence="1">
    <location>
        <position position="327"/>
    </location>
</feature>
<feature type="active site" description="Proton acceptor" evidence="1">
    <location>
        <position position="328"/>
    </location>
</feature>
<feature type="binding site" evidence="1">
    <location>
        <position position="130"/>
    </location>
    <ligand>
        <name>NAD(+)</name>
        <dbReference type="ChEBI" id="CHEBI:57540"/>
    </ligand>
</feature>
<feature type="binding site" evidence="1">
    <location>
        <position position="191"/>
    </location>
    <ligand>
        <name>NAD(+)</name>
        <dbReference type="ChEBI" id="CHEBI:57540"/>
    </ligand>
</feature>
<feature type="binding site" evidence="1">
    <location>
        <position position="214"/>
    </location>
    <ligand>
        <name>NAD(+)</name>
        <dbReference type="ChEBI" id="CHEBI:57540"/>
    </ligand>
</feature>
<feature type="binding site" evidence="1">
    <location>
        <position position="237"/>
    </location>
    <ligand>
        <name>substrate</name>
    </ligand>
</feature>
<feature type="binding site" evidence="1">
    <location>
        <position position="259"/>
    </location>
    <ligand>
        <name>substrate</name>
    </ligand>
</feature>
<feature type="binding site" evidence="1">
    <location>
        <position position="259"/>
    </location>
    <ligand>
        <name>Zn(2+)</name>
        <dbReference type="ChEBI" id="CHEBI:29105"/>
    </ligand>
</feature>
<feature type="binding site" evidence="1">
    <location>
        <position position="262"/>
    </location>
    <ligand>
        <name>substrate</name>
    </ligand>
</feature>
<feature type="binding site" evidence="1">
    <location>
        <position position="262"/>
    </location>
    <ligand>
        <name>Zn(2+)</name>
        <dbReference type="ChEBI" id="CHEBI:29105"/>
    </ligand>
</feature>
<feature type="binding site" evidence="1">
    <location>
        <position position="328"/>
    </location>
    <ligand>
        <name>substrate</name>
    </ligand>
</feature>
<feature type="binding site" evidence="1">
    <location>
        <position position="361"/>
    </location>
    <ligand>
        <name>substrate</name>
    </ligand>
</feature>
<feature type="binding site" evidence="1">
    <location>
        <position position="361"/>
    </location>
    <ligand>
        <name>Zn(2+)</name>
        <dbReference type="ChEBI" id="CHEBI:29105"/>
    </ligand>
</feature>
<feature type="binding site" evidence="1">
    <location>
        <position position="415"/>
    </location>
    <ligand>
        <name>substrate</name>
    </ligand>
</feature>
<feature type="binding site" evidence="1">
    <location>
        <position position="420"/>
    </location>
    <ligand>
        <name>substrate</name>
    </ligand>
</feature>
<feature type="binding site" evidence="1">
    <location>
        <position position="420"/>
    </location>
    <ligand>
        <name>Zn(2+)</name>
        <dbReference type="ChEBI" id="CHEBI:29105"/>
    </ligand>
</feature>
<feature type="strand" evidence="2">
    <location>
        <begin position="4"/>
        <end position="9"/>
    </location>
</feature>
<feature type="helix" evidence="2">
    <location>
        <begin position="12"/>
        <end position="20"/>
    </location>
</feature>
<feature type="helix" evidence="2">
    <location>
        <begin position="30"/>
        <end position="44"/>
    </location>
</feature>
<feature type="helix" evidence="2">
    <location>
        <begin position="46"/>
        <end position="57"/>
    </location>
</feature>
<feature type="helix" evidence="2">
    <location>
        <begin position="61"/>
        <end position="64"/>
    </location>
</feature>
<feature type="helix" evidence="2">
    <location>
        <begin position="70"/>
        <end position="79"/>
    </location>
</feature>
<feature type="helix" evidence="2">
    <location>
        <begin position="82"/>
        <end position="100"/>
    </location>
</feature>
<feature type="strand" evidence="2">
    <location>
        <begin position="107"/>
        <end position="110"/>
    </location>
</feature>
<feature type="strand" evidence="2">
    <location>
        <begin position="116"/>
        <end position="123"/>
    </location>
</feature>
<feature type="strand" evidence="2">
    <location>
        <begin position="125"/>
        <end position="130"/>
    </location>
</feature>
<feature type="helix" evidence="2">
    <location>
        <begin position="134"/>
        <end position="136"/>
    </location>
</feature>
<feature type="helix" evidence="2">
    <location>
        <begin position="139"/>
        <end position="152"/>
    </location>
</feature>
<feature type="strand" evidence="2">
    <location>
        <begin position="155"/>
        <end position="160"/>
    </location>
</feature>
<feature type="helix" evidence="2">
    <location>
        <begin position="164"/>
        <end position="166"/>
    </location>
</feature>
<feature type="helix" evidence="2">
    <location>
        <begin position="170"/>
        <end position="178"/>
    </location>
</feature>
<feature type="strand" evidence="2">
    <location>
        <begin position="183"/>
        <end position="186"/>
    </location>
</feature>
<feature type="helix" evidence="2">
    <location>
        <begin position="189"/>
        <end position="198"/>
    </location>
</feature>
<feature type="strand" evidence="2">
    <location>
        <begin position="201"/>
        <end position="203"/>
    </location>
</feature>
<feature type="strand" evidence="2">
    <location>
        <begin position="207"/>
        <end position="210"/>
    </location>
</feature>
<feature type="helix" evidence="2">
    <location>
        <begin position="215"/>
        <end position="224"/>
    </location>
</feature>
<feature type="strand" evidence="2">
    <location>
        <begin position="228"/>
        <end position="230"/>
    </location>
</feature>
<feature type="strand" evidence="2">
    <location>
        <begin position="238"/>
        <end position="243"/>
    </location>
</feature>
<feature type="strand" evidence="2">
    <location>
        <begin position="245"/>
        <end position="247"/>
    </location>
</feature>
<feature type="helix" evidence="2">
    <location>
        <begin position="249"/>
        <end position="260"/>
    </location>
</feature>
<feature type="strand" evidence="2">
    <location>
        <begin position="267"/>
        <end position="273"/>
    </location>
</feature>
<feature type="helix" evidence="2">
    <location>
        <begin position="275"/>
        <end position="291"/>
    </location>
</feature>
<feature type="helix" evidence="2">
    <location>
        <begin position="296"/>
        <end position="305"/>
    </location>
</feature>
<feature type="strand" evidence="2">
    <location>
        <begin position="307"/>
        <end position="310"/>
    </location>
</feature>
<feature type="helix" evidence="2">
    <location>
        <begin position="314"/>
        <end position="324"/>
    </location>
</feature>
<feature type="strand" evidence="2">
    <location>
        <begin position="327"/>
        <end position="333"/>
    </location>
</feature>
<feature type="helix" evidence="2">
    <location>
        <begin position="336"/>
        <end position="338"/>
    </location>
</feature>
<feature type="turn" evidence="2">
    <location>
        <begin position="339"/>
        <end position="342"/>
    </location>
</feature>
<feature type="strand" evidence="2">
    <location>
        <begin position="347"/>
        <end position="352"/>
    </location>
</feature>
<feature type="helix" evidence="2">
    <location>
        <begin position="357"/>
        <end position="362"/>
    </location>
</feature>
<feature type="strand" evidence="2">
    <location>
        <begin position="364"/>
        <end position="366"/>
    </location>
</feature>
<feature type="helix" evidence="2">
    <location>
        <begin position="375"/>
        <end position="377"/>
    </location>
</feature>
<feature type="helix" evidence="2">
    <location>
        <begin position="384"/>
        <end position="387"/>
    </location>
</feature>
<feature type="strand" evidence="2">
    <location>
        <begin position="388"/>
        <end position="395"/>
    </location>
</feature>
<feature type="helix" evidence="2">
    <location>
        <begin position="398"/>
        <end position="414"/>
    </location>
</feature>
<feature type="helix" evidence="2">
    <location>
        <begin position="418"/>
        <end position="430"/>
    </location>
</feature>
<dbReference type="EC" id="1.1.1.23" evidence="1"/>
<dbReference type="EMBL" id="AE014291">
    <property type="protein sequence ID" value="AAN29201.1"/>
    <property type="molecule type" value="Genomic_DNA"/>
</dbReference>
<dbReference type="EMBL" id="CP002997">
    <property type="protein sequence ID" value="AEM17614.1"/>
    <property type="molecule type" value="Genomic_DNA"/>
</dbReference>
<dbReference type="RefSeq" id="WP_004687945.1">
    <property type="nucleotide sequence ID" value="NZ_KN046804.1"/>
</dbReference>
<dbReference type="PDB" id="4G07">
    <property type="method" value="X-ray"/>
    <property type="resolution" value="1.95 A"/>
    <property type="chains" value="A=1-430"/>
</dbReference>
<dbReference type="PDB" id="4G09">
    <property type="method" value="X-ray"/>
    <property type="resolution" value="1.90 A"/>
    <property type="chains" value="A=1-430"/>
</dbReference>
<dbReference type="PDBsum" id="4G07"/>
<dbReference type="PDBsum" id="4G09"/>
<dbReference type="SMR" id="Q8G2R2"/>
<dbReference type="BindingDB" id="Q8G2R2"/>
<dbReference type="ChEMBL" id="CHEMBL5431"/>
<dbReference type="GeneID" id="97534347"/>
<dbReference type="KEGG" id="bms:BR0252"/>
<dbReference type="KEGG" id="bsi:BS1330_I0253"/>
<dbReference type="PATRIC" id="fig|204722.21.peg.1041"/>
<dbReference type="HOGENOM" id="CLU_006732_3_3_5"/>
<dbReference type="PhylomeDB" id="Q8G2R2"/>
<dbReference type="BRENDA" id="1.1.1.23">
    <property type="organism ID" value="8693"/>
</dbReference>
<dbReference type="UniPathway" id="UPA00031">
    <property type="reaction ID" value="UER00014"/>
</dbReference>
<dbReference type="EvolutionaryTrace" id="Q8G2R2"/>
<dbReference type="PRO" id="PR:Q8G2R2"/>
<dbReference type="Proteomes" id="UP000007104">
    <property type="component" value="Chromosome I"/>
</dbReference>
<dbReference type="GO" id="GO:0005829">
    <property type="term" value="C:cytosol"/>
    <property type="evidence" value="ECO:0007669"/>
    <property type="project" value="TreeGrafter"/>
</dbReference>
<dbReference type="GO" id="GO:0004399">
    <property type="term" value="F:histidinol dehydrogenase activity"/>
    <property type="evidence" value="ECO:0007669"/>
    <property type="project" value="UniProtKB-UniRule"/>
</dbReference>
<dbReference type="GO" id="GO:0051287">
    <property type="term" value="F:NAD binding"/>
    <property type="evidence" value="ECO:0007669"/>
    <property type="project" value="InterPro"/>
</dbReference>
<dbReference type="GO" id="GO:0008270">
    <property type="term" value="F:zinc ion binding"/>
    <property type="evidence" value="ECO:0007669"/>
    <property type="project" value="UniProtKB-UniRule"/>
</dbReference>
<dbReference type="GO" id="GO:0000105">
    <property type="term" value="P:L-histidine biosynthetic process"/>
    <property type="evidence" value="ECO:0007669"/>
    <property type="project" value="UniProtKB-UniRule"/>
</dbReference>
<dbReference type="CDD" id="cd06572">
    <property type="entry name" value="Histidinol_dh"/>
    <property type="match status" value="1"/>
</dbReference>
<dbReference type="FunFam" id="3.40.50.1980:FF:000001">
    <property type="entry name" value="Histidinol dehydrogenase"/>
    <property type="match status" value="1"/>
</dbReference>
<dbReference type="FunFam" id="3.40.50.1980:FF:000026">
    <property type="entry name" value="Histidinol dehydrogenase"/>
    <property type="match status" value="1"/>
</dbReference>
<dbReference type="FunFam" id="1.20.5.1300:FF:000002">
    <property type="entry name" value="Histidinol dehydrogenase, chloroplastic"/>
    <property type="match status" value="1"/>
</dbReference>
<dbReference type="Gene3D" id="1.20.5.1300">
    <property type="match status" value="1"/>
</dbReference>
<dbReference type="Gene3D" id="3.40.50.1980">
    <property type="entry name" value="Nitrogenase molybdenum iron protein domain"/>
    <property type="match status" value="2"/>
</dbReference>
<dbReference type="HAMAP" id="MF_01024">
    <property type="entry name" value="HisD"/>
    <property type="match status" value="1"/>
</dbReference>
<dbReference type="InterPro" id="IPR016161">
    <property type="entry name" value="Ald_DH/histidinol_DH"/>
</dbReference>
<dbReference type="InterPro" id="IPR001692">
    <property type="entry name" value="Histidinol_DH_CS"/>
</dbReference>
<dbReference type="InterPro" id="IPR022695">
    <property type="entry name" value="Histidinol_DH_monofunct"/>
</dbReference>
<dbReference type="InterPro" id="IPR012131">
    <property type="entry name" value="Hstdl_DH"/>
</dbReference>
<dbReference type="NCBIfam" id="TIGR00069">
    <property type="entry name" value="hisD"/>
    <property type="match status" value="1"/>
</dbReference>
<dbReference type="PANTHER" id="PTHR21256:SF2">
    <property type="entry name" value="HISTIDINE BIOSYNTHESIS TRIFUNCTIONAL PROTEIN"/>
    <property type="match status" value="1"/>
</dbReference>
<dbReference type="PANTHER" id="PTHR21256">
    <property type="entry name" value="HISTIDINOL DEHYDROGENASE HDH"/>
    <property type="match status" value="1"/>
</dbReference>
<dbReference type="Pfam" id="PF00815">
    <property type="entry name" value="Histidinol_dh"/>
    <property type="match status" value="1"/>
</dbReference>
<dbReference type="PIRSF" id="PIRSF000099">
    <property type="entry name" value="Histidinol_dh"/>
    <property type="match status" value="1"/>
</dbReference>
<dbReference type="PRINTS" id="PR00083">
    <property type="entry name" value="HOLDHDRGNASE"/>
</dbReference>
<dbReference type="SUPFAM" id="SSF53720">
    <property type="entry name" value="ALDH-like"/>
    <property type="match status" value="1"/>
</dbReference>
<dbReference type="PROSITE" id="PS00611">
    <property type="entry name" value="HISOL_DEHYDROGENASE"/>
    <property type="match status" value="1"/>
</dbReference>
<accession>Q8G2R2</accession>
<accession>G0KBV1</accession>
<keyword id="KW-0002">3D-structure</keyword>
<keyword id="KW-0028">Amino-acid biosynthesis</keyword>
<keyword id="KW-0368">Histidine biosynthesis</keyword>
<keyword id="KW-0479">Metal-binding</keyword>
<keyword id="KW-0520">NAD</keyword>
<keyword id="KW-0560">Oxidoreductase</keyword>
<keyword id="KW-0862">Zinc</keyword>
<sequence length="430" mass="46072">MVTTLRQTDPDFEQKFAAFLSGKREVSEDVDRAVREIVDRVRREGDSALLDYSRRFDRIDLEKTGIAVTEAEIDAAFDAAPASTVEALKLARDRIEKHHARQLPKDDRYTDALGVELGSRWTAIEAVGLYVPGGTASYPSSVLMNAMPAKVAGVDRIVMVVPAPDGNLNPLVLVAARLAGVSEIYRVGGAQAIAALAYGTETIRPVAKIVGPGNAYVAAAKRIVFGTVGIDMIAGPSEVLIVADKDNNPDWIAADLLAQAEHDTAAQSILMTNDEAFAHAVEEAVERQLHTLARTETASASWRDFGAVILVKDFEDAIPLANRIAAEHLEIAVADAEAFVPRIRNAGSIFIGGYTPEVIGDYVGGCNHVLPTARSARFSSGLSVLDYMKRTSLLKLGSEQLRALGPAAIEIARAEGLDAHAQSVAIRLNL</sequence>
<gene>
    <name evidence="1" type="primary">hisD</name>
    <name type="ordered locus">BR0252</name>
    <name type="ordered locus">BS1330_I0253</name>
</gene>
<reference key="1">
    <citation type="journal article" date="2002" name="Proc. Natl. Acad. Sci. U.S.A.">
        <title>The Brucella suis genome reveals fundamental similarities between animal and plant pathogens and symbionts.</title>
        <authorList>
            <person name="Paulsen I.T."/>
            <person name="Seshadri R."/>
            <person name="Nelson K.E."/>
            <person name="Eisen J.A."/>
            <person name="Heidelberg J.F."/>
            <person name="Read T.D."/>
            <person name="Dodson R.J."/>
            <person name="Umayam L.A."/>
            <person name="Brinkac L.M."/>
            <person name="Beanan M.J."/>
            <person name="Daugherty S.C."/>
            <person name="DeBoy R.T."/>
            <person name="Durkin A.S."/>
            <person name="Kolonay J.F."/>
            <person name="Madupu R."/>
            <person name="Nelson W.C."/>
            <person name="Ayodeji B."/>
            <person name="Kraul M."/>
            <person name="Shetty J."/>
            <person name="Malek J.A."/>
            <person name="Van Aken S.E."/>
            <person name="Riedmuller S."/>
            <person name="Tettelin H."/>
            <person name="Gill S.R."/>
            <person name="White O."/>
            <person name="Salzberg S.L."/>
            <person name="Hoover D.L."/>
            <person name="Lindler L.E."/>
            <person name="Halling S.M."/>
            <person name="Boyle S.M."/>
            <person name="Fraser C.M."/>
        </authorList>
    </citation>
    <scope>NUCLEOTIDE SEQUENCE [LARGE SCALE GENOMIC DNA]</scope>
    <source>
        <strain>1330</strain>
    </source>
</reference>
<reference key="2">
    <citation type="journal article" date="2011" name="J. Bacteriol.">
        <title>Revised genome sequence of Brucella suis 1330.</title>
        <authorList>
            <person name="Tae H."/>
            <person name="Shallom S."/>
            <person name="Settlage R."/>
            <person name="Preston D."/>
            <person name="Adams L.G."/>
            <person name="Garner H.R."/>
        </authorList>
    </citation>
    <scope>NUCLEOTIDE SEQUENCE [LARGE SCALE GENOMIC DNA]</scope>
    <source>
        <strain>1330</strain>
    </source>
</reference>
<comment type="function">
    <text evidence="1">Catalyzes the sequential NAD-dependent oxidations of L-histidinol to L-histidinaldehyde and then to L-histidine.</text>
</comment>
<comment type="catalytic activity">
    <reaction evidence="1">
        <text>L-histidinol + 2 NAD(+) + H2O = L-histidine + 2 NADH + 3 H(+)</text>
        <dbReference type="Rhea" id="RHEA:20641"/>
        <dbReference type="ChEBI" id="CHEBI:15377"/>
        <dbReference type="ChEBI" id="CHEBI:15378"/>
        <dbReference type="ChEBI" id="CHEBI:57540"/>
        <dbReference type="ChEBI" id="CHEBI:57595"/>
        <dbReference type="ChEBI" id="CHEBI:57699"/>
        <dbReference type="ChEBI" id="CHEBI:57945"/>
        <dbReference type="EC" id="1.1.1.23"/>
    </reaction>
</comment>
<comment type="cofactor">
    <cofactor evidence="1">
        <name>Zn(2+)</name>
        <dbReference type="ChEBI" id="CHEBI:29105"/>
    </cofactor>
    <text evidence="1">Binds 1 zinc ion per subunit.</text>
</comment>
<comment type="pathway">
    <text evidence="1">Amino-acid biosynthesis; L-histidine biosynthesis; L-histidine from 5-phospho-alpha-D-ribose 1-diphosphate: step 9/9.</text>
</comment>
<comment type="similarity">
    <text evidence="1">Belongs to the histidinol dehydrogenase family.</text>
</comment>
<proteinExistence type="evidence at protein level"/>
<name>HISX_BRUSU</name>
<evidence type="ECO:0000255" key="1">
    <source>
        <dbReference type="HAMAP-Rule" id="MF_01024"/>
    </source>
</evidence>
<evidence type="ECO:0007829" key="2">
    <source>
        <dbReference type="PDB" id="4G09"/>
    </source>
</evidence>